<sequence>MRLLLSLPVLLVALSVVLERPAPAQAAPDFSSTLEGLPDKLKEFGNTLEDKAKKAIERIKQSDLPAKTRNWFTETFGKVRDTFKATFS</sequence>
<proteinExistence type="inferred from homology"/>
<dbReference type="EMBL" id="U86690">
    <property type="protein sequence ID" value="AAD32951.1"/>
    <property type="molecule type" value="mRNA"/>
</dbReference>
<dbReference type="SMR" id="Q9XSN5"/>
<dbReference type="GO" id="GO:0034364">
    <property type="term" value="C:high-density lipoprotein particle"/>
    <property type="evidence" value="ECO:0007669"/>
    <property type="project" value="TreeGrafter"/>
</dbReference>
<dbReference type="GO" id="GO:0034361">
    <property type="term" value="C:very-low-density lipoprotein particle"/>
    <property type="evidence" value="ECO:0007669"/>
    <property type="project" value="UniProtKB-KW"/>
</dbReference>
<dbReference type="GO" id="GO:0005504">
    <property type="term" value="F:fatty acid binding"/>
    <property type="evidence" value="ECO:0007669"/>
    <property type="project" value="TreeGrafter"/>
</dbReference>
<dbReference type="GO" id="GO:0004859">
    <property type="term" value="F:phospholipase inhibitor activity"/>
    <property type="evidence" value="ECO:0007669"/>
    <property type="project" value="TreeGrafter"/>
</dbReference>
<dbReference type="GO" id="GO:0006869">
    <property type="term" value="P:lipid transport"/>
    <property type="evidence" value="ECO:0007669"/>
    <property type="project" value="UniProtKB-KW"/>
</dbReference>
<dbReference type="GO" id="GO:0042157">
    <property type="term" value="P:lipoprotein metabolic process"/>
    <property type="evidence" value="ECO:0007669"/>
    <property type="project" value="InterPro"/>
</dbReference>
<dbReference type="GO" id="GO:0032375">
    <property type="term" value="P:negative regulation of cholesterol transport"/>
    <property type="evidence" value="ECO:0007669"/>
    <property type="project" value="TreeGrafter"/>
</dbReference>
<dbReference type="GO" id="GO:0050995">
    <property type="term" value="P:negative regulation of lipid catabolic process"/>
    <property type="evidence" value="ECO:0007669"/>
    <property type="project" value="TreeGrafter"/>
</dbReference>
<dbReference type="GO" id="GO:0010916">
    <property type="term" value="P:negative regulation of very-low-density lipoprotein particle clearance"/>
    <property type="evidence" value="ECO:0007669"/>
    <property type="project" value="TreeGrafter"/>
</dbReference>
<dbReference type="GO" id="GO:0006641">
    <property type="term" value="P:triglyceride metabolic process"/>
    <property type="evidence" value="ECO:0007669"/>
    <property type="project" value="TreeGrafter"/>
</dbReference>
<dbReference type="GO" id="GO:0034447">
    <property type="term" value="P:very-low-density lipoprotein particle clearance"/>
    <property type="evidence" value="ECO:0007669"/>
    <property type="project" value="TreeGrafter"/>
</dbReference>
<dbReference type="Gene3D" id="4.10.260.30">
    <property type="entry name" value="Apolipoprotein C-I"/>
    <property type="match status" value="1"/>
</dbReference>
<dbReference type="InterPro" id="IPR043081">
    <property type="entry name" value="ApoC-1_sf"/>
</dbReference>
<dbReference type="InterPro" id="IPR006781">
    <property type="entry name" value="ApoC-I"/>
</dbReference>
<dbReference type="PANTHER" id="PTHR16565">
    <property type="entry name" value="APOLIPOPROTEIN C-I"/>
    <property type="match status" value="1"/>
</dbReference>
<dbReference type="PANTHER" id="PTHR16565:SF2">
    <property type="entry name" value="APOLIPOPROTEIN C-I"/>
    <property type="match status" value="1"/>
</dbReference>
<dbReference type="Pfam" id="PF04691">
    <property type="entry name" value="ApoC-I"/>
    <property type="match status" value="1"/>
</dbReference>
<keyword id="KW-0445">Lipid transport</keyword>
<keyword id="KW-0964">Secreted</keyword>
<keyword id="KW-0732">Signal</keyword>
<keyword id="KW-0813">Transport</keyword>
<keyword id="KW-0850">VLDL</keyword>
<accession>Q9XSN5</accession>
<name>APOC1_TUPGL</name>
<feature type="signal peptide" evidence="1">
    <location>
        <begin position="1"/>
        <end position="26"/>
    </location>
</feature>
<feature type="chain" id="PRO_0000002019" description="Apolipoprotein C-I">
    <location>
        <begin position="27"/>
        <end position="88"/>
    </location>
</feature>
<feature type="chain" id="PRO_0000391847" description="Truncated apolipoprotein C-I" evidence="4">
    <location>
        <begin position="29"/>
        <end position="88"/>
    </location>
</feature>
<organism>
    <name type="scientific">Tupaia glis</name>
    <name type="common">Common tree shrew</name>
    <name type="synonym">Sorex glis</name>
    <dbReference type="NCBI Taxonomy" id="9395"/>
    <lineage>
        <taxon>Eukaryota</taxon>
        <taxon>Metazoa</taxon>
        <taxon>Chordata</taxon>
        <taxon>Craniata</taxon>
        <taxon>Vertebrata</taxon>
        <taxon>Euteleostomi</taxon>
        <taxon>Mammalia</taxon>
        <taxon>Eutheria</taxon>
        <taxon>Euarchontoglires</taxon>
        <taxon>Scandentia</taxon>
        <taxon>Tupaiidae</taxon>
        <taxon>Tupaia</taxon>
    </lineage>
</organism>
<gene>
    <name type="primary">APOC1</name>
</gene>
<evidence type="ECO:0000250" key="1"/>
<evidence type="ECO:0000250" key="2">
    <source>
        <dbReference type="UniProtKB" id="P02654"/>
    </source>
</evidence>
<evidence type="ECO:0000250" key="3">
    <source>
        <dbReference type="UniProtKB" id="P33047"/>
    </source>
</evidence>
<evidence type="ECO:0000250" key="4">
    <source>
        <dbReference type="UniProtKB" id="P86336"/>
    </source>
</evidence>
<evidence type="ECO:0000305" key="5"/>
<reference key="1">
    <citation type="submission" date="1997-01" db="EMBL/GenBank/DDBJ databases">
        <title>Cloning and sequencing of apolipoprotein CI cDNA of tree shrew.</title>
        <authorList>
            <person name="Lu X.Y."/>
            <person name="Chen B.S."/>
            <person name="Wang K.Q."/>
            <person name="Zhao Y.L."/>
            <person name="Zhu D.M."/>
            <person name="Zen W.W."/>
            <person name="Xue H."/>
        </authorList>
    </citation>
    <scope>NUCLEOTIDE SEQUENCE [MRNA]</scope>
    <source>
        <tissue>Liver</tissue>
    </source>
</reference>
<protein>
    <recommendedName>
        <fullName>Apolipoprotein C-I</fullName>
        <shortName>Apo-CI</shortName>
        <shortName>ApoC-I</shortName>
    </recommendedName>
    <alternativeName>
        <fullName>Apolipoprotein C1</fullName>
    </alternativeName>
    <component>
        <recommendedName>
            <fullName>Truncated apolipoprotein C-I</fullName>
        </recommendedName>
    </component>
</protein>
<comment type="function">
    <text evidence="2 3">Inhibitor of lipoprotein binding to the low density lipoprotein (LDL) receptor, LDL receptor-related protein, and very low density lipoprotein (VLDL) receptor. Associates with high density lipoproteins (HDL) and the triacylglycerol-rich lipoproteins in the plasma and makes up about 10% of the protein of the VLDL and 2% of that of HDL. Appears to interfere directly with fatty acid uptake and is also the major plasma inhibitor of cholesteryl ester transfer protein (CETP). Binds free fatty acids and reduces their intracellular esterification. Modulates the interaction of APOE with beta-migrating VLDL and inhibits binding of beta-VLDL to the LDL receptor-related protein.</text>
</comment>
<comment type="subcellular location">
    <subcellularLocation>
        <location evidence="2">Secreted</location>
    </subcellularLocation>
</comment>
<comment type="similarity">
    <text evidence="5">Belongs to the apolipoprotein C1 family.</text>
</comment>